<protein>
    <recommendedName>
        <fullName evidence="1">UPF0270 protein PC1_3850</fullName>
    </recommendedName>
</protein>
<sequence length="78" mass="9082">MIIPWQQLDPETLDNIIESFVLREGTDYGEQEWSLAQKVEDIRRQLKSGEVVLVWSELHETLNIMPRDQFNAGGHAPY</sequence>
<reference key="1">
    <citation type="submission" date="2009-07" db="EMBL/GenBank/DDBJ databases">
        <title>Complete sequence of Pectobacterium carotovorum subsp. carotovorum PC1.</title>
        <authorList>
            <consortium name="US DOE Joint Genome Institute"/>
            <person name="Lucas S."/>
            <person name="Copeland A."/>
            <person name="Lapidus A."/>
            <person name="Glavina del Rio T."/>
            <person name="Tice H."/>
            <person name="Bruce D."/>
            <person name="Goodwin L."/>
            <person name="Pitluck S."/>
            <person name="Munk A.C."/>
            <person name="Brettin T."/>
            <person name="Detter J.C."/>
            <person name="Han C."/>
            <person name="Tapia R."/>
            <person name="Larimer F."/>
            <person name="Land M."/>
            <person name="Hauser L."/>
            <person name="Kyrpides N."/>
            <person name="Mikhailova N."/>
            <person name="Balakrishnan V."/>
            <person name="Glasner J."/>
            <person name="Perna N.T."/>
        </authorList>
    </citation>
    <scope>NUCLEOTIDE SEQUENCE [LARGE SCALE GENOMIC DNA]</scope>
    <source>
        <strain>PC1</strain>
    </source>
</reference>
<comment type="similarity">
    <text evidence="1">Belongs to the UPF0270 family.</text>
</comment>
<proteinExistence type="inferred from homology"/>
<gene>
    <name type="ordered locus">PC1_3850</name>
</gene>
<evidence type="ECO:0000255" key="1">
    <source>
        <dbReference type="HAMAP-Rule" id="MF_00690"/>
    </source>
</evidence>
<organism>
    <name type="scientific">Pectobacterium carotovorum subsp. carotovorum (strain PC1)</name>
    <dbReference type="NCBI Taxonomy" id="561230"/>
    <lineage>
        <taxon>Bacteria</taxon>
        <taxon>Pseudomonadati</taxon>
        <taxon>Pseudomonadota</taxon>
        <taxon>Gammaproteobacteria</taxon>
        <taxon>Enterobacterales</taxon>
        <taxon>Pectobacteriaceae</taxon>
        <taxon>Pectobacterium</taxon>
    </lineage>
</organism>
<dbReference type="EMBL" id="CP001657">
    <property type="protein sequence ID" value="ACT14865.1"/>
    <property type="molecule type" value="Genomic_DNA"/>
</dbReference>
<dbReference type="RefSeq" id="WP_015841950.1">
    <property type="nucleotide sequence ID" value="NC_012917.1"/>
</dbReference>
<dbReference type="SMR" id="C6DGA2"/>
<dbReference type="STRING" id="561230.PC1_3850"/>
<dbReference type="KEGG" id="pct:PC1_3850"/>
<dbReference type="eggNOG" id="COG3089">
    <property type="taxonomic scope" value="Bacteria"/>
</dbReference>
<dbReference type="HOGENOM" id="CLU_186759_1_0_6"/>
<dbReference type="OrthoDB" id="6120729at2"/>
<dbReference type="Proteomes" id="UP000002736">
    <property type="component" value="Chromosome"/>
</dbReference>
<dbReference type="Gene3D" id="1.10.10.610">
    <property type="entry name" value="YehU-like"/>
    <property type="match status" value="1"/>
</dbReference>
<dbReference type="HAMAP" id="MF_00690">
    <property type="entry name" value="UPF0270"/>
    <property type="match status" value="1"/>
</dbReference>
<dbReference type="InterPro" id="IPR010648">
    <property type="entry name" value="UPF0270"/>
</dbReference>
<dbReference type="InterPro" id="IPR036685">
    <property type="entry name" value="YehU-like_sf"/>
</dbReference>
<dbReference type="NCBIfam" id="NF003438">
    <property type="entry name" value="PRK04966.1"/>
    <property type="match status" value="1"/>
</dbReference>
<dbReference type="Pfam" id="PF06794">
    <property type="entry name" value="UPF0270"/>
    <property type="match status" value="1"/>
</dbReference>
<dbReference type="PIRSF" id="PIRSF006169">
    <property type="entry name" value="UCP006169"/>
    <property type="match status" value="1"/>
</dbReference>
<dbReference type="SUPFAM" id="SSF118001">
    <property type="entry name" value="YehU-like"/>
    <property type="match status" value="1"/>
</dbReference>
<accession>C6DGA2</accession>
<feature type="chain" id="PRO_1000212581" description="UPF0270 protein PC1_3850">
    <location>
        <begin position="1"/>
        <end position="78"/>
    </location>
</feature>
<name>Y3850_PECCP</name>